<sequence>MTDLIPLEQAHCLPRKGSDHKLGEARLAELLPQVPGWELAEAGMAITRTFRFADYYRTLAFVNALAWIAHREDHHPDLGVHYDRVVVRYSTHDVGGLSENDFICAAKVAQLFDQGITA</sequence>
<comment type="catalytic activity">
    <reaction evidence="1">
        <text>(4aS,6R)-4a-hydroxy-L-erythro-5,6,7,8-tetrahydrobiopterin = (6R)-L-erythro-6,7-dihydrobiopterin + H2O</text>
        <dbReference type="Rhea" id="RHEA:11920"/>
        <dbReference type="ChEBI" id="CHEBI:15377"/>
        <dbReference type="ChEBI" id="CHEBI:15642"/>
        <dbReference type="ChEBI" id="CHEBI:43120"/>
        <dbReference type="EC" id="4.2.1.96"/>
    </reaction>
</comment>
<comment type="similarity">
    <text evidence="1">Belongs to the pterin-4-alpha-carbinolamine dehydratase family.</text>
</comment>
<feature type="chain" id="PRO_0000063106" description="Putative pterin-4-alpha-carbinolamine dehydratase">
    <location>
        <begin position="1"/>
        <end position="118"/>
    </location>
</feature>
<keyword id="KW-0456">Lyase</keyword>
<keyword id="KW-1185">Reference proteome</keyword>
<name>PHS_XANCP</name>
<proteinExistence type="inferred from homology"/>
<evidence type="ECO:0000255" key="1">
    <source>
        <dbReference type="HAMAP-Rule" id="MF_00434"/>
    </source>
</evidence>
<protein>
    <recommendedName>
        <fullName evidence="1">Putative pterin-4-alpha-carbinolamine dehydratase</fullName>
        <shortName evidence="1">PHS</shortName>
        <ecNumber evidence="1">4.2.1.96</ecNumber>
    </recommendedName>
    <alternativeName>
        <fullName evidence="1">4-alpha-hydroxy-tetrahydropterin dehydratase</fullName>
    </alternativeName>
    <alternativeName>
        <fullName evidence="1">Pterin carbinolamine dehydratase</fullName>
        <shortName evidence="1">PCD</shortName>
    </alternativeName>
</protein>
<reference key="1">
    <citation type="journal article" date="2002" name="Nature">
        <title>Comparison of the genomes of two Xanthomonas pathogens with differing host specificities.</title>
        <authorList>
            <person name="da Silva A.C.R."/>
            <person name="Ferro J.A."/>
            <person name="Reinach F.C."/>
            <person name="Farah C.S."/>
            <person name="Furlan L.R."/>
            <person name="Quaggio R.B."/>
            <person name="Monteiro-Vitorello C.B."/>
            <person name="Van Sluys M.A."/>
            <person name="Almeida N.F. Jr."/>
            <person name="Alves L.M.C."/>
            <person name="do Amaral A.M."/>
            <person name="Bertolini M.C."/>
            <person name="Camargo L.E.A."/>
            <person name="Camarotte G."/>
            <person name="Cannavan F."/>
            <person name="Cardozo J."/>
            <person name="Chambergo F."/>
            <person name="Ciapina L.P."/>
            <person name="Cicarelli R.M.B."/>
            <person name="Coutinho L.L."/>
            <person name="Cursino-Santos J.R."/>
            <person name="El-Dorry H."/>
            <person name="Faria J.B."/>
            <person name="Ferreira A.J.S."/>
            <person name="Ferreira R.C.C."/>
            <person name="Ferro M.I.T."/>
            <person name="Formighieri E.F."/>
            <person name="Franco M.C."/>
            <person name="Greggio C.C."/>
            <person name="Gruber A."/>
            <person name="Katsuyama A.M."/>
            <person name="Kishi L.T."/>
            <person name="Leite R.P."/>
            <person name="Lemos E.G.M."/>
            <person name="Lemos M.V.F."/>
            <person name="Locali E.C."/>
            <person name="Machado M.A."/>
            <person name="Madeira A.M.B.N."/>
            <person name="Martinez-Rossi N.M."/>
            <person name="Martins E.C."/>
            <person name="Meidanis J."/>
            <person name="Menck C.F.M."/>
            <person name="Miyaki C.Y."/>
            <person name="Moon D.H."/>
            <person name="Moreira L.M."/>
            <person name="Novo M.T.M."/>
            <person name="Okura V.K."/>
            <person name="Oliveira M.C."/>
            <person name="Oliveira V.R."/>
            <person name="Pereira H.A."/>
            <person name="Rossi A."/>
            <person name="Sena J.A.D."/>
            <person name="Silva C."/>
            <person name="de Souza R.F."/>
            <person name="Spinola L.A.F."/>
            <person name="Takita M.A."/>
            <person name="Tamura R.E."/>
            <person name="Teixeira E.C."/>
            <person name="Tezza R.I.D."/>
            <person name="Trindade dos Santos M."/>
            <person name="Truffi D."/>
            <person name="Tsai S.M."/>
            <person name="White F.F."/>
            <person name="Setubal J.C."/>
            <person name="Kitajima J.P."/>
        </authorList>
    </citation>
    <scope>NUCLEOTIDE SEQUENCE [LARGE SCALE GENOMIC DNA]</scope>
    <source>
        <strain>ATCC 33913 / DSM 3586 / NCPPB 528 / LMG 568 / P 25</strain>
    </source>
</reference>
<organism>
    <name type="scientific">Xanthomonas campestris pv. campestris (strain ATCC 33913 / DSM 3586 / NCPPB 528 / LMG 568 / P 25)</name>
    <dbReference type="NCBI Taxonomy" id="190485"/>
    <lineage>
        <taxon>Bacteria</taxon>
        <taxon>Pseudomonadati</taxon>
        <taxon>Pseudomonadota</taxon>
        <taxon>Gammaproteobacteria</taxon>
        <taxon>Lysobacterales</taxon>
        <taxon>Lysobacteraceae</taxon>
        <taxon>Xanthomonas</taxon>
    </lineage>
</organism>
<gene>
    <name type="primary">phhB</name>
    <name type="ordered locus">XCC2080</name>
</gene>
<accession>Q8P8Z8</accession>
<dbReference type="EC" id="4.2.1.96" evidence="1"/>
<dbReference type="EMBL" id="AE008922">
    <property type="protein sequence ID" value="AAM41369.1"/>
    <property type="molecule type" value="Genomic_DNA"/>
</dbReference>
<dbReference type="RefSeq" id="NP_637445.1">
    <property type="nucleotide sequence ID" value="NC_003902.1"/>
</dbReference>
<dbReference type="RefSeq" id="WP_011037236.1">
    <property type="nucleotide sequence ID" value="NC_003902.1"/>
</dbReference>
<dbReference type="SMR" id="Q8P8Z8"/>
<dbReference type="STRING" id="190485.XCC2080"/>
<dbReference type="EnsemblBacteria" id="AAM41369">
    <property type="protein sequence ID" value="AAM41369"/>
    <property type="gene ID" value="XCC2080"/>
</dbReference>
<dbReference type="KEGG" id="xcc:XCC2080"/>
<dbReference type="PATRIC" id="fig|190485.4.peg.2227"/>
<dbReference type="eggNOG" id="COG2154">
    <property type="taxonomic scope" value="Bacteria"/>
</dbReference>
<dbReference type="HOGENOM" id="CLU_081974_2_1_6"/>
<dbReference type="OrthoDB" id="5294615at2"/>
<dbReference type="Proteomes" id="UP000001010">
    <property type="component" value="Chromosome"/>
</dbReference>
<dbReference type="GO" id="GO:0008124">
    <property type="term" value="F:4-alpha-hydroxytetrahydrobiopterin dehydratase activity"/>
    <property type="evidence" value="ECO:0000318"/>
    <property type="project" value="GO_Central"/>
</dbReference>
<dbReference type="GO" id="GO:0006729">
    <property type="term" value="P:tetrahydrobiopterin biosynthetic process"/>
    <property type="evidence" value="ECO:0007669"/>
    <property type="project" value="InterPro"/>
</dbReference>
<dbReference type="CDD" id="cd00913">
    <property type="entry name" value="PCD_DCoH_subfamily_a"/>
    <property type="match status" value="1"/>
</dbReference>
<dbReference type="Gene3D" id="3.30.1360.20">
    <property type="entry name" value="Transcriptional coactivator/pterin dehydratase"/>
    <property type="match status" value="1"/>
</dbReference>
<dbReference type="HAMAP" id="MF_00434">
    <property type="entry name" value="Pterin_4_alpha"/>
    <property type="match status" value="1"/>
</dbReference>
<dbReference type="InterPro" id="IPR036428">
    <property type="entry name" value="PCD_sf"/>
</dbReference>
<dbReference type="InterPro" id="IPR001533">
    <property type="entry name" value="Pterin_deHydtase"/>
</dbReference>
<dbReference type="NCBIfam" id="NF002019">
    <property type="entry name" value="PRK00823.1-4"/>
    <property type="match status" value="1"/>
</dbReference>
<dbReference type="PANTHER" id="PTHR12599">
    <property type="entry name" value="PTERIN-4-ALPHA-CARBINOLAMINE DEHYDRATASE"/>
    <property type="match status" value="1"/>
</dbReference>
<dbReference type="PANTHER" id="PTHR12599:SF0">
    <property type="entry name" value="PTERIN-4-ALPHA-CARBINOLAMINE DEHYDRATASE"/>
    <property type="match status" value="1"/>
</dbReference>
<dbReference type="Pfam" id="PF01329">
    <property type="entry name" value="Pterin_4a"/>
    <property type="match status" value="1"/>
</dbReference>
<dbReference type="SUPFAM" id="SSF55248">
    <property type="entry name" value="PCD-like"/>
    <property type="match status" value="1"/>
</dbReference>